<comment type="function">
    <text evidence="2 3">Plays a role in the biosynthesis of B-band O antigen for serotype O5. Catalyzes the epimerization of UDP-2,3-diacetamido-2,3-dideoxy-alpha-D-glucuronic acid (UDP-alpha-D-GlcNAc3NAcA) to UDP-2,3-diacetamido-2,3-dideoxy-alpha-D-mannuronic acid (UDP-alpha-D-ManNAc3NAcA). Exhibits high specificity towards the substrate as UDP-alpha-D-GlcNAc, UDP-alpha-D-GlcNAcA (UDP-2-acetamido-2-deoxy-alpha-D-glucuronic acid) and UDP-alpha-D-GlcNAc3NAc (UDP-2,3-diacetamido-2,3-dideoxy-alpha-D-glucose) cannot act as substrates.</text>
</comment>
<comment type="catalytic activity">
    <reaction evidence="3">
        <text>UDP-2,3-diacetamido-2,3-dideoxy-alpha-D-glucuronate = UDP-2,3-diacetamido-2,3-dideoxy-alpha-D-mannuronate</text>
        <dbReference type="Rhea" id="RHEA:24764"/>
        <dbReference type="ChEBI" id="CHEBI:58745"/>
        <dbReference type="ChEBI" id="CHEBI:58746"/>
        <dbReference type="EC" id="5.1.3.23"/>
    </reaction>
</comment>
<comment type="biophysicochemical properties">
    <phDependence>
        <text evidence="3">Optimum pH is 6.0.</text>
    </phDependence>
    <temperatureDependence>
        <text evidence="3">Optimum temperature is 30-37 degrees Celsius.</text>
    </temperatureDependence>
</comment>
<comment type="pathway">
    <text evidence="2 3 4">Bacterial outer membrane biogenesis; LPS O-antigen biosynthesis.</text>
</comment>
<comment type="similarity">
    <text evidence="1">Belongs to the UDP-N-acetylglucosamine 2-epimerase family.</text>
</comment>
<comment type="sequence caution" evidence="6">
    <conflict type="frameshift">
        <sequence resource="EMBL-CDS" id="AAC45863"/>
    </conflict>
</comment>
<reference evidence="6 7" key="1">
    <citation type="journal article" date="1996" name="Mol. Microbiol.">
        <title>Molecular characterization of the Pseudomonas aeruginosa serotype O5 (PAO1) B-band lipopolysaccharide gene cluster.</title>
        <authorList>
            <person name="Burrows L.L."/>
            <person name="Charter D.F."/>
            <person name="Lam J.S."/>
        </authorList>
    </citation>
    <scope>NUCLEOTIDE SEQUENCE [GENOMIC DNA]</scope>
    <scope>PATHWAY</scope>
    <source>
        <strain evidence="7">ATCC 15692 / DSM 22644 / CIP 104116 / JCM 14847 / LMG 12228 / 1C / PRS 101 / PAO1</strain>
    </source>
</reference>
<reference evidence="8" key="2">
    <citation type="journal article" date="2000" name="Nature">
        <title>Complete genome sequence of Pseudomonas aeruginosa PAO1, an opportunistic pathogen.</title>
        <authorList>
            <person name="Stover C.K."/>
            <person name="Pham X.-Q.T."/>
            <person name="Erwin A.L."/>
            <person name="Mizoguchi S.D."/>
            <person name="Warrener P."/>
            <person name="Hickey M.J."/>
            <person name="Brinkman F.S.L."/>
            <person name="Hufnagle W.O."/>
            <person name="Kowalik D.J."/>
            <person name="Lagrou M."/>
            <person name="Garber R.L."/>
            <person name="Goltry L."/>
            <person name="Tolentino E."/>
            <person name="Westbrock-Wadman S."/>
            <person name="Yuan Y."/>
            <person name="Brody L.L."/>
            <person name="Coulter S.N."/>
            <person name="Folger K.R."/>
            <person name="Kas A."/>
            <person name="Larbig K."/>
            <person name="Lim R.M."/>
            <person name="Smith K.A."/>
            <person name="Spencer D.H."/>
            <person name="Wong G.K.-S."/>
            <person name="Wu Z."/>
            <person name="Paulsen I.T."/>
            <person name="Reizer J."/>
            <person name="Saier M.H. Jr."/>
            <person name="Hancock R.E.W."/>
            <person name="Lory S."/>
            <person name="Olson M.V."/>
        </authorList>
    </citation>
    <scope>NUCLEOTIDE SEQUENCE [LARGE SCALE GENOMIC DNA]</scope>
    <source>
        <strain>ATCC 15692 / DSM 22644 / CIP 104116 / JCM 14847 / LMG 12228 / 1C / PRS 101 / PAO1</strain>
    </source>
</reference>
<reference evidence="6" key="3">
    <citation type="journal article" date="2000" name="FEMS Microbiol. Lett.">
        <title>Pseudomonas aeruginosa B-band lipopolysaccharide genes wbpA and wbpI and their Escherichia coli homologues wecC and wecB are not functionally interchangeable.</title>
        <authorList>
            <person name="Burrows L.L."/>
            <person name="Pigeon K.E."/>
            <person name="Lam J.S."/>
        </authorList>
    </citation>
    <scope>FUNCTION</scope>
    <scope>PATHWAY</scope>
    <source>
        <strain evidence="2">ATCC 15692 / DSM 22644 / CIP 104116 / JCM 14847 / LMG 12228 / 1C / PRS 101 / PAO1</strain>
    </source>
</reference>
<reference evidence="6" key="4">
    <citation type="journal article" date="2007" name="Biochem. J.">
        <title>Identification and biochemical characterization of two novel UDP-2,3-diacetamido-2,3-dideoxy-alpha-D-glucuronic acid 2-epimerases from respiratory pathogens.</title>
        <authorList>
            <person name="Westman E.L."/>
            <person name="McNally D.J."/>
            <person name="Rejzek M."/>
            <person name="Miller W.L."/>
            <person name="Kannathasan V.S."/>
            <person name="Preston A."/>
            <person name="Maskell D.J."/>
            <person name="Field R.A."/>
            <person name="Brisson J.R."/>
            <person name="Lam J.S."/>
        </authorList>
    </citation>
    <scope>FUNCTION</scope>
    <scope>CATALYTIC ACTIVITY</scope>
    <scope>SUBSTRATE SPECIFICITY</scope>
    <scope>BIOPHYSICOCHEMICAL PROPERTIES</scope>
    <scope>PATHWAY</scope>
    <source>
        <strain evidence="3">ATCC 15692 / DSM 22644 / CIP 104116 / JCM 14847 / LMG 12228 / 1C / PRS 101 / PAO1</strain>
    </source>
</reference>
<sequence length="354" mass="38907">MKILTIIGARPQFIKASVVSKAIIEQQTLSEIIVHTGQHFDANMSEIFFEQLGIPKPDYQLDIHGGTHGQMTGRMLMEIEDVILKEKPHRVLVYGDTNSTLAGALAASKLHVPIAHIEAGLRSFNMRMPEEINRILTDQVSDILFCPTRVAIDNLKNEGFERKAAKIVNVGDVMQDSALFFAQRATSPIGLASQDGFILATLHRAENTDDPVRLTSIVEALNEIQINVAPVVLPLHPRTRGVIERLGLKLEVQVIDPVGYLEMIWLLQRSGLVLTDSGGVQKEAFFFGKPCVTMRDQTEWVELVTCGANVLVGAARDMIVESARTSLGKTIQDDGQLYGGGQASSRIAEYLAKL</sequence>
<dbReference type="EC" id="5.1.3.23" evidence="3"/>
<dbReference type="EMBL" id="U50396">
    <property type="protein sequence ID" value="AAC45863.1"/>
    <property type="status" value="ALT_FRAME"/>
    <property type="molecule type" value="Genomic_DNA"/>
</dbReference>
<dbReference type="EMBL" id="AE004091">
    <property type="protein sequence ID" value="AAG06536.1"/>
    <property type="molecule type" value="Genomic_DNA"/>
</dbReference>
<dbReference type="PIR" id="C83253">
    <property type="entry name" value="C83253"/>
</dbReference>
<dbReference type="RefSeq" id="NP_251838.1">
    <property type="nucleotide sequence ID" value="NC_002516.2"/>
</dbReference>
<dbReference type="SMR" id="G3XD61"/>
<dbReference type="FunCoup" id="G3XD61">
    <property type="interactions" value="462"/>
</dbReference>
<dbReference type="STRING" id="208964.PA3148"/>
<dbReference type="PaxDb" id="208964-PA3148"/>
<dbReference type="DNASU" id="882693"/>
<dbReference type="GeneID" id="882693"/>
<dbReference type="KEGG" id="pae:PA3148"/>
<dbReference type="PATRIC" id="fig|208964.12.peg.3297"/>
<dbReference type="PseudoCAP" id="PA3148"/>
<dbReference type="HOGENOM" id="CLU_041674_0_1_6"/>
<dbReference type="InParanoid" id="G3XD61"/>
<dbReference type="OrthoDB" id="9803238at2"/>
<dbReference type="PhylomeDB" id="G3XD61"/>
<dbReference type="BioCyc" id="MetaCyc:MONOMER-17576"/>
<dbReference type="BioCyc" id="PAER208964:G1FZ6-3208-MONOMER"/>
<dbReference type="UniPathway" id="UPA00281"/>
<dbReference type="Proteomes" id="UP000002438">
    <property type="component" value="Chromosome"/>
</dbReference>
<dbReference type="GO" id="GO:0050378">
    <property type="term" value="F:UDP-glucuronate 4-epimerase activity"/>
    <property type="evidence" value="ECO:0000269"/>
    <property type="project" value="PseudoCAP"/>
</dbReference>
<dbReference type="GO" id="GO:0008761">
    <property type="term" value="F:UDP-N-acetylglucosamine 2-epimerase activity"/>
    <property type="evidence" value="ECO:0000314"/>
    <property type="project" value="UniProtKB"/>
</dbReference>
<dbReference type="GO" id="GO:0071555">
    <property type="term" value="P:cell wall organization"/>
    <property type="evidence" value="ECO:0007669"/>
    <property type="project" value="UniProtKB-KW"/>
</dbReference>
<dbReference type="GO" id="GO:0009243">
    <property type="term" value="P:O antigen biosynthetic process"/>
    <property type="evidence" value="ECO:0000315"/>
    <property type="project" value="PseudoCAP"/>
</dbReference>
<dbReference type="GO" id="GO:0000271">
    <property type="term" value="P:polysaccharide biosynthetic process"/>
    <property type="evidence" value="ECO:0000315"/>
    <property type="project" value="PseudoCAP"/>
</dbReference>
<dbReference type="CDD" id="cd03786">
    <property type="entry name" value="GTB_UDP-GlcNAc_2-Epimerase"/>
    <property type="match status" value="1"/>
</dbReference>
<dbReference type="Gene3D" id="3.40.50.2000">
    <property type="entry name" value="Glycogen Phosphorylase B"/>
    <property type="match status" value="2"/>
</dbReference>
<dbReference type="InterPro" id="IPR003331">
    <property type="entry name" value="UDP_GlcNAc_Epimerase_2_dom"/>
</dbReference>
<dbReference type="InterPro" id="IPR029767">
    <property type="entry name" value="WecB-like"/>
</dbReference>
<dbReference type="NCBIfam" id="TIGR00236">
    <property type="entry name" value="wecB"/>
    <property type="match status" value="1"/>
</dbReference>
<dbReference type="PANTHER" id="PTHR43174">
    <property type="entry name" value="UDP-N-ACETYLGLUCOSAMINE 2-EPIMERASE"/>
    <property type="match status" value="1"/>
</dbReference>
<dbReference type="PANTHER" id="PTHR43174:SF1">
    <property type="entry name" value="UDP-N-ACETYLGLUCOSAMINE 2-EPIMERASE"/>
    <property type="match status" value="1"/>
</dbReference>
<dbReference type="Pfam" id="PF02350">
    <property type="entry name" value="Epimerase_2"/>
    <property type="match status" value="1"/>
</dbReference>
<dbReference type="SUPFAM" id="SSF53756">
    <property type="entry name" value="UDP-Glycosyltransferase/glycogen phosphorylase"/>
    <property type="match status" value="1"/>
</dbReference>
<accession>G3XD61</accession>
<accession>P72142</accession>
<organism>
    <name type="scientific">Pseudomonas aeruginosa (strain ATCC 15692 / DSM 22644 / CIP 104116 / JCM 14847 / LMG 12228 / 1C / PRS 101 / PAO1)</name>
    <dbReference type="NCBI Taxonomy" id="208964"/>
    <lineage>
        <taxon>Bacteria</taxon>
        <taxon>Pseudomonadati</taxon>
        <taxon>Pseudomonadota</taxon>
        <taxon>Gammaproteobacteria</taxon>
        <taxon>Pseudomonadales</taxon>
        <taxon>Pseudomonadaceae</taxon>
        <taxon>Pseudomonas</taxon>
    </lineage>
</organism>
<proteinExistence type="evidence at protein level"/>
<gene>
    <name evidence="8" type="primary">wbpI</name>
    <name type="ordered locus">PA3148</name>
</gene>
<name>WBPI_PSEAE</name>
<keyword id="KW-0961">Cell wall biogenesis/degradation</keyword>
<keyword id="KW-0413">Isomerase</keyword>
<keyword id="KW-0448">Lipopolysaccharide biosynthesis</keyword>
<keyword id="KW-1185">Reference proteome</keyword>
<protein>
    <recommendedName>
        <fullName>UDP-2,3-diacetamido-2,3-dideoxy-D-glucuronate 2-epimerase</fullName>
        <shortName evidence="5">UDP-alpha-D-GlcNAc3NAcA 2-epimerase</shortName>
        <ecNumber evidence="3">5.1.3.23</ecNumber>
    </recommendedName>
    <alternativeName>
        <fullName evidence="5">UDP-2,3-diacetamido-2,3-dideoxy-alpha-D-glucuronic acid 2-epimerase</fullName>
    </alternativeName>
</protein>
<evidence type="ECO:0000255" key="1"/>
<evidence type="ECO:0000269" key="2">
    <source>
    </source>
</evidence>
<evidence type="ECO:0000269" key="3">
    <source>
    </source>
</evidence>
<evidence type="ECO:0000269" key="4">
    <source>
    </source>
</evidence>
<evidence type="ECO:0000303" key="5">
    <source>
    </source>
</evidence>
<evidence type="ECO:0000305" key="6"/>
<evidence type="ECO:0000312" key="7">
    <source>
        <dbReference type="EMBL" id="AAC45863.1"/>
    </source>
</evidence>
<evidence type="ECO:0000312" key="8">
    <source>
        <dbReference type="EMBL" id="AAG06536.1"/>
    </source>
</evidence>
<feature type="chain" id="PRO_0000419618" description="UDP-2,3-diacetamido-2,3-dideoxy-D-glucuronate 2-epimerase">
    <location>
        <begin position="1"/>
        <end position="354"/>
    </location>
</feature>